<dbReference type="EMBL" id="AK290164">
    <property type="protein sequence ID" value="BAF82853.1"/>
    <property type="status" value="ALT_SEQ"/>
    <property type="molecule type" value="mRNA"/>
</dbReference>
<dbReference type="EMBL" id="AL354740">
    <property type="status" value="NOT_ANNOTATED_CDS"/>
    <property type="molecule type" value="Genomic_DNA"/>
</dbReference>
<dbReference type="EMBL" id="AY062936">
    <property type="status" value="NOT_ANNOTATED_CDS"/>
    <property type="molecule type" value="Genomic_DNA"/>
</dbReference>
<dbReference type="EMBL" id="CH471081">
    <property type="protein sequence ID" value="EAX03775.1"/>
    <property type="status" value="ALT_SEQ"/>
    <property type="molecule type" value="Genomic_DNA"/>
</dbReference>
<dbReference type="EMBL" id="BC023627">
    <property type="protein sequence ID" value="AAH23627.1"/>
    <property type="status" value="ALT_SEQ"/>
    <property type="molecule type" value="mRNA"/>
</dbReference>
<dbReference type="EMBL" id="BC047919">
    <property type="protein sequence ID" value="AAH47919.1"/>
    <property type="status" value="ALT_SEQ"/>
    <property type="molecule type" value="mRNA"/>
</dbReference>
<dbReference type="CCDS" id="CCDS4790.2">
    <molecule id="Q86T20-1"/>
</dbReference>
<dbReference type="CCDS" id="CCDS93896.1">
    <molecule id="Q86T20-2"/>
</dbReference>
<dbReference type="RefSeq" id="NP_001008703.2">
    <molecule id="Q86T20-1"/>
    <property type="nucleotide sequence ID" value="NM_001008703.4"/>
</dbReference>
<dbReference type="RefSeq" id="NP_001008704.2">
    <molecule id="Q86T20-2"/>
    <property type="nucleotide sequence ID" value="NM_001008704.4"/>
</dbReference>
<dbReference type="RefSeq" id="NP_001274325.2">
    <molecule id="Q86T20-2"/>
    <property type="nucleotide sequence ID" value="NM_001287396.3"/>
</dbReference>
<dbReference type="RefSeq" id="NP_848603.3">
    <molecule id="Q86T20-1"/>
    <property type="nucleotide sequence ID" value="NM_178508.6"/>
</dbReference>
<dbReference type="SMR" id="Q86T20"/>
<dbReference type="BioGRID" id="128734">
    <property type="interactions" value="1"/>
</dbReference>
<dbReference type="FunCoup" id="Q86T20">
    <property type="interactions" value="46"/>
</dbReference>
<dbReference type="GlyCosmos" id="Q86T20">
    <property type="glycosylation" value="1 site, No reported glycans"/>
</dbReference>
<dbReference type="GlyGen" id="Q86T20">
    <property type="glycosylation" value="1 site"/>
</dbReference>
<dbReference type="BioMuta" id="SMIM29"/>
<dbReference type="DMDM" id="296434441"/>
<dbReference type="MassIVE" id="Q86T20"/>
<dbReference type="PeptideAtlas" id="Q86T20"/>
<dbReference type="Antibodypedia" id="49194">
    <property type="antibodies" value="61 antibodies from 11 providers"/>
</dbReference>
<dbReference type="DNASU" id="221491"/>
<dbReference type="Ensembl" id="ENST00000394990.8">
    <molecule id="Q86T20-2"/>
    <property type="protein sequence ID" value="ENSP00000378441.5"/>
    <property type="gene ID" value="ENSG00000186577.14"/>
</dbReference>
<dbReference type="Ensembl" id="ENST00000468145.1">
    <molecule id="Q86T20-2"/>
    <property type="protein sequence ID" value="ENSP00000418884.2"/>
    <property type="gene ID" value="ENSG00000186577.14"/>
</dbReference>
<dbReference type="Ensembl" id="ENST00000476320.6">
    <molecule id="Q86T20-1"/>
    <property type="protein sequence ID" value="ENSP00000417604.2"/>
    <property type="gene ID" value="ENSG00000186577.14"/>
</dbReference>
<dbReference type="Ensembl" id="ENST00000481533.5">
    <molecule id="Q86T20-1"/>
    <property type="protein sequence ID" value="ENSP00000418062.2"/>
    <property type="gene ID" value="ENSG00000186577.14"/>
</dbReference>
<dbReference type="GeneID" id="221491"/>
<dbReference type="KEGG" id="hsa:221491"/>
<dbReference type="MANE-Select" id="ENST00000476320.6">
    <property type="protein sequence ID" value="ENSP00000417604.2"/>
    <property type="RefSeq nucleotide sequence ID" value="NM_001008703.4"/>
    <property type="RefSeq protein sequence ID" value="NP_001008703.2"/>
</dbReference>
<dbReference type="UCSC" id="uc003ojf.5">
    <molecule id="Q86T20-1"/>
    <property type="organism name" value="human"/>
</dbReference>
<dbReference type="AGR" id="HGNC:1340"/>
<dbReference type="CTD" id="221491"/>
<dbReference type="DisGeNET" id="221491"/>
<dbReference type="GeneCards" id="SMIM29"/>
<dbReference type="HGNC" id="HGNC:1340">
    <property type="gene designation" value="SMIM29"/>
</dbReference>
<dbReference type="HPA" id="ENSG00000186577">
    <property type="expression patterns" value="Tissue enhanced (brain)"/>
</dbReference>
<dbReference type="MIM" id="611419">
    <property type="type" value="gene"/>
</dbReference>
<dbReference type="neXtProt" id="NX_Q86T20"/>
<dbReference type="OpenTargets" id="ENSG00000186577"/>
<dbReference type="PharmGKB" id="PA25922"/>
<dbReference type="VEuPathDB" id="HostDB:ENSG00000186577"/>
<dbReference type="eggNOG" id="ENOG502TJYS">
    <property type="taxonomic scope" value="Eukaryota"/>
</dbReference>
<dbReference type="GeneTree" id="ENSGT00410000025882"/>
<dbReference type="HOGENOM" id="CLU_140428_0_0_1"/>
<dbReference type="InParanoid" id="Q86T20"/>
<dbReference type="OMA" id="AVIMYIR"/>
<dbReference type="OrthoDB" id="9527595at2759"/>
<dbReference type="PAN-GO" id="Q86T20">
    <property type="GO annotations" value="0 GO annotations based on evolutionary models"/>
</dbReference>
<dbReference type="PhylomeDB" id="Q86T20"/>
<dbReference type="TreeFam" id="TF338380"/>
<dbReference type="PathwayCommons" id="Q86T20"/>
<dbReference type="BioGRID-ORCS" id="221491">
    <property type="hits" value="23 hits in 1144 CRISPR screens"/>
</dbReference>
<dbReference type="ChiTaRS" id="C6orf1">
    <property type="organism name" value="human"/>
</dbReference>
<dbReference type="GenomeRNAi" id="221491"/>
<dbReference type="Pharos" id="Q86T20">
    <property type="development level" value="Tbio"/>
</dbReference>
<dbReference type="PRO" id="PR:Q86T20"/>
<dbReference type="Proteomes" id="UP000005640">
    <property type="component" value="Chromosome 6"/>
</dbReference>
<dbReference type="RNAct" id="Q86T20">
    <property type="molecule type" value="protein"/>
</dbReference>
<dbReference type="Bgee" id="ENSG00000186577">
    <property type="expression patterns" value="Expressed in cingulate cortex and 159 other cell types or tissues"/>
</dbReference>
<dbReference type="ExpressionAtlas" id="Q86T20">
    <property type="expression patterns" value="baseline and differential"/>
</dbReference>
<dbReference type="GO" id="GO:0016020">
    <property type="term" value="C:membrane"/>
    <property type="evidence" value="ECO:0007669"/>
    <property type="project" value="UniProtKB-SubCell"/>
</dbReference>
<dbReference type="InterPro" id="IPR043239">
    <property type="entry name" value="SMIM29"/>
</dbReference>
<dbReference type="PANTHER" id="PTHR47730">
    <property type="entry name" value="SMALL INTEGRAL MEMBRANE PROTEIN 29"/>
    <property type="match status" value="1"/>
</dbReference>
<dbReference type="PANTHER" id="PTHR47730:SF1">
    <property type="entry name" value="SMALL INTEGRAL MEMBRANE PROTEIN 29"/>
    <property type="match status" value="1"/>
</dbReference>
<proteinExistence type="evidence at protein level"/>
<accession>Q86T20</accession>
<accession>A0A1C7CYX6</accession>
<accession>A8K299</accession>
<name>SIM29_HUMAN</name>
<comment type="subcellular location">
    <subcellularLocation>
        <location evidence="1">Membrane</location>
        <topology evidence="1">Single-pass membrane protein</topology>
    </subcellularLocation>
</comment>
<comment type="alternative products">
    <event type="alternative splicing"/>
    <isoform>
        <id>Q86T20-1</id>
        <name>1</name>
        <sequence type="displayed"/>
    </isoform>
    <isoform>
        <id>Q86T20-2</id>
        <name>2</name>
        <sequence type="described" ref="VSP_059576"/>
    </isoform>
</comment>
<comment type="tissue specificity">
    <text evidence="2">Expressed in spleen, thymus, prostate, testis, uterus, small intestine, colon and peripheral blood leukocytes.</text>
</comment>
<comment type="sequence caution" evidence="5">
    <conflict type="erroneous translation">
        <sequence resource="EMBL-CDS" id="AAH23627"/>
    </conflict>
    <text>Wrong choice of CDS.</text>
</comment>
<comment type="sequence caution" evidence="5">
    <conflict type="erroneous translation">
        <sequence resource="EMBL-CDS" id="AAH47919"/>
    </conflict>
    <text>Wrong choice of CDS.</text>
</comment>
<comment type="sequence caution" evidence="5">
    <conflict type="erroneous translation">
        <sequence resource="EMBL-CDS" id="BAF82853"/>
    </conflict>
    <text>Wrong choice of CDS.</text>
</comment>
<comment type="sequence caution" evidence="5">
    <conflict type="erroneous gene model prediction">
        <sequence resource="EMBL-CDS" id="EAX03775"/>
    </conflict>
</comment>
<sequence>MSNTTVPNAPQANSDSMVGYVLGPFFLITLVGVVVAVVMYVQKKKRVDRLRHHLLPMYSYDPAEELHEAEQELLSDMGDPKVVHGWQSGYQHKRMPLLDVKT</sequence>
<protein>
    <recommendedName>
        <fullName evidence="6">Small integral membrane protein 29</fullName>
    </recommendedName>
    <alternativeName>
        <fullName evidence="3">Protein LBH</fullName>
    </alternativeName>
</protein>
<gene>
    <name evidence="6" type="primary">SMIM29</name>
    <name type="synonym">C6orf1</name>
    <name evidence="3" type="synonym">LBH</name>
</gene>
<feature type="chain" id="PRO_0000019539" description="Small integral membrane protein 29">
    <location>
        <begin position="1"/>
        <end position="102"/>
    </location>
</feature>
<feature type="transmembrane region" description="Helical" evidence="1">
    <location>
        <begin position="21"/>
        <end position="41"/>
    </location>
</feature>
<feature type="glycosylation site" description="N-linked (GlcNAc...) asparagine" evidence="1">
    <location>
        <position position="3"/>
    </location>
</feature>
<feature type="splice variant" id="VSP_059576" description="In isoform 2." evidence="4">
    <location>
        <begin position="18"/>
        <end position="37"/>
    </location>
</feature>
<evidence type="ECO:0000255" key="1"/>
<evidence type="ECO:0000269" key="2">
    <source>
    </source>
</evidence>
<evidence type="ECO:0000303" key="3">
    <source>
    </source>
</evidence>
<evidence type="ECO:0000303" key="4">
    <source>
    </source>
</evidence>
<evidence type="ECO:0000305" key="5"/>
<evidence type="ECO:0000312" key="6">
    <source>
        <dbReference type="HGNC" id="HGNC:1340"/>
    </source>
</evidence>
<reference key="1">
    <citation type="journal article" date="2004" name="Nat. Genet.">
        <title>Complete sequencing and characterization of 21,243 full-length human cDNAs.</title>
        <authorList>
            <person name="Ota T."/>
            <person name="Suzuki Y."/>
            <person name="Nishikawa T."/>
            <person name="Otsuki T."/>
            <person name="Sugiyama T."/>
            <person name="Irie R."/>
            <person name="Wakamatsu A."/>
            <person name="Hayashi K."/>
            <person name="Sato H."/>
            <person name="Nagai K."/>
            <person name="Kimura K."/>
            <person name="Makita H."/>
            <person name="Sekine M."/>
            <person name="Obayashi M."/>
            <person name="Nishi T."/>
            <person name="Shibahara T."/>
            <person name="Tanaka T."/>
            <person name="Ishii S."/>
            <person name="Yamamoto J."/>
            <person name="Saito K."/>
            <person name="Kawai Y."/>
            <person name="Isono Y."/>
            <person name="Nakamura Y."/>
            <person name="Nagahari K."/>
            <person name="Murakami K."/>
            <person name="Yasuda T."/>
            <person name="Iwayanagi T."/>
            <person name="Wagatsuma M."/>
            <person name="Shiratori A."/>
            <person name="Sudo H."/>
            <person name="Hosoiri T."/>
            <person name="Kaku Y."/>
            <person name="Kodaira H."/>
            <person name="Kondo H."/>
            <person name="Sugawara M."/>
            <person name="Takahashi M."/>
            <person name="Kanda K."/>
            <person name="Yokoi T."/>
            <person name="Furuya T."/>
            <person name="Kikkawa E."/>
            <person name="Omura Y."/>
            <person name="Abe K."/>
            <person name="Kamihara K."/>
            <person name="Katsuta N."/>
            <person name="Sato K."/>
            <person name="Tanikawa M."/>
            <person name="Yamazaki M."/>
            <person name="Ninomiya K."/>
            <person name="Ishibashi T."/>
            <person name="Yamashita H."/>
            <person name="Murakawa K."/>
            <person name="Fujimori K."/>
            <person name="Tanai H."/>
            <person name="Kimata M."/>
            <person name="Watanabe M."/>
            <person name="Hiraoka S."/>
            <person name="Chiba Y."/>
            <person name="Ishida S."/>
            <person name="Ono Y."/>
            <person name="Takiguchi S."/>
            <person name="Watanabe S."/>
            <person name="Yosida M."/>
            <person name="Hotuta T."/>
            <person name="Kusano J."/>
            <person name="Kanehori K."/>
            <person name="Takahashi-Fujii A."/>
            <person name="Hara H."/>
            <person name="Tanase T.-O."/>
            <person name="Nomura Y."/>
            <person name="Togiya S."/>
            <person name="Komai F."/>
            <person name="Hara R."/>
            <person name="Takeuchi K."/>
            <person name="Arita M."/>
            <person name="Imose N."/>
            <person name="Musashino K."/>
            <person name="Yuuki H."/>
            <person name="Oshima A."/>
            <person name="Sasaki N."/>
            <person name="Aotsuka S."/>
            <person name="Yoshikawa Y."/>
            <person name="Matsunawa H."/>
            <person name="Ichihara T."/>
            <person name="Shiohata N."/>
            <person name="Sano S."/>
            <person name="Moriya S."/>
            <person name="Momiyama H."/>
            <person name="Satoh N."/>
            <person name="Takami S."/>
            <person name="Terashima Y."/>
            <person name="Suzuki O."/>
            <person name="Nakagawa S."/>
            <person name="Senoh A."/>
            <person name="Mizoguchi H."/>
            <person name="Goto Y."/>
            <person name="Shimizu F."/>
            <person name="Wakebe H."/>
            <person name="Hishigaki H."/>
            <person name="Watanabe T."/>
            <person name="Sugiyama A."/>
            <person name="Takemoto M."/>
            <person name="Kawakami B."/>
            <person name="Yamazaki M."/>
            <person name="Watanabe K."/>
            <person name="Kumagai A."/>
            <person name="Itakura S."/>
            <person name="Fukuzumi Y."/>
            <person name="Fujimori Y."/>
            <person name="Komiyama M."/>
            <person name="Tashiro H."/>
            <person name="Tanigami A."/>
            <person name="Fujiwara T."/>
            <person name="Ono T."/>
            <person name="Yamada K."/>
            <person name="Fujii Y."/>
            <person name="Ozaki K."/>
            <person name="Hirao M."/>
            <person name="Ohmori Y."/>
            <person name="Kawabata A."/>
            <person name="Hikiji T."/>
            <person name="Kobatake N."/>
            <person name="Inagaki H."/>
            <person name="Ikema Y."/>
            <person name="Okamoto S."/>
            <person name="Okitani R."/>
            <person name="Kawakami T."/>
            <person name="Noguchi S."/>
            <person name="Itoh T."/>
            <person name="Shigeta K."/>
            <person name="Senba T."/>
            <person name="Matsumura K."/>
            <person name="Nakajima Y."/>
            <person name="Mizuno T."/>
            <person name="Morinaga M."/>
            <person name="Sasaki M."/>
            <person name="Togashi T."/>
            <person name="Oyama M."/>
            <person name="Hata H."/>
            <person name="Watanabe M."/>
            <person name="Komatsu T."/>
            <person name="Mizushima-Sugano J."/>
            <person name="Satoh T."/>
            <person name="Shirai Y."/>
            <person name="Takahashi Y."/>
            <person name="Nakagawa K."/>
            <person name="Okumura K."/>
            <person name="Nagase T."/>
            <person name="Nomura N."/>
            <person name="Kikuchi H."/>
            <person name="Masuho Y."/>
            <person name="Yamashita R."/>
            <person name="Nakai K."/>
            <person name="Yada T."/>
            <person name="Nakamura Y."/>
            <person name="Ohara O."/>
            <person name="Isogai T."/>
            <person name="Sugano S."/>
        </authorList>
    </citation>
    <scope>NUCLEOTIDE SEQUENCE [LARGE SCALE MRNA] (ISOFORM 1)</scope>
    <source>
        <tissue>Thalamus</tissue>
    </source>
</reference>
<reference key="2">
    <citation type="journal article" date="2003" name="Nature">
        <title>The DNA sequence and analysis of human chromosome 6.</title>
        <authorList>
            <person name="Mungall A.J."/>
            <person name="Palmer S.A."/>
            <person name="Sims S.K."/>
            <person name="Edwards C.A."/>
            <person name="Ashurst J.L."/>
            <person name="Wilming L."/>
            <person name="Jones M.C."/>
            <person name="Horton R."/>
            <person name="Hunt S.E."/>
            <person name="Scott C.E."/>
            <person name="Gilbert J.G.R."/>
            <person name="Clamp M.E."/>
            <person name="Bethel G."/>
            <person name="Milne S."/>
            <person name="Ainscough R."/>
            <person name="Almeida J.P."/>
            <person name="Ambrose K.D."/>
            <person name="Andrews T.D."/>
            <person name="Ashwell R.I.S."/>
            <person name="Babbage A.K."/>
            <person name="Bagguley C.L."/>
            <person name="Bailey J."/>
            <person name="Banerjee R."/>
            <person name="Barker D.J."/>
            <person name="Barlow K.F."/>
            <person name="Bates K."/>
            <person name="Beare D.M."/>
            <person name="Beasley H."/>
            <person name="Beasley O."/>
            <person name="Bird C.P."/>
            <person name="Blakey S.E."/>
            <person name="Bray-Allen S."/>
            <person name="Brook J."/>
            <person name="Brown A.J."/>
            <person name="Brown J.Y."/>
            <person name="Burford D.C."/>
            <person name="Burrill W."/>
            <person name="Burton J."/>
            <person name="Carder C."/>
            <person name="Carter N.P."/>
            <person name="Chapman J.C."/>
            <person name="Clark S.Y."/>
            <person name="Clark G."/>
            <person name="Clee C.M."/>
            <person name="Clegg S."/>
            <person name="Cobley V."/>
            <person name="Collier R.E."/>
            <person name="Collins J.E."/>
            <person name="Colman L.K."/>
            <person name="Corby N.R."/>
            <person name="Coville G.J."/>
            <person name="Culley K.M."/>
            <person name="Dhami P."/>
            <person name="Davies J."/>
            <person name="Dunn M."/>
            <person name="Earthrowl M.E."/>
            <person name="Ellington A.E."/>
            <person name="Evans K.A."/>
            <person name="Faulkner L."/>
            <person name="Francis M.D."/>
            <person name="Frankish A."/>
            <person name="Frankland J."/>
            <person name="French L."/>
            <person name="Garner P."/>
            <person name="Garnett J."/>
            <person name="Ghori M.J."/>
            <person name="Gilby L.M."/>
            <person name="Gillson C.J."/>
            <person name="Glithero R.J."/>
            <person name="Grafham D.V."/>
            <person name="Grant M."/>
            <person name="Gribble S."/>
            <person name="Griffiths C."/>
            <person name="Griffiths M.N.D."/>
            <person name="Hall R."/>
            <person name="Halls K.S."/>
            <person name="Hammond S."/>
            <person name="Harley J.L."/>
            <person name="Hart E.A."/>
            <person name="Heath P.D."/>
            <person name="Heathcott R."/>
            <person name="Holmes S.J."/>
            <person name="Howden P.J."/>
            <person name="Howe K.L."/>
            <person name="Howell G.R."/>
            <person name="Huckle E."/>
            <person name="Humphray S.J."/>
            <person name="Humphries M.D."/>
            <person name="Hunt A.R."/>
            <person name="Johnson C.M."/>
            <person name="Joy A.A."/>
            <person name="Kay M."/>
            <person name="Keenan S.J."/>
            <person name="Kimberley A.M."/>
            <person name="King A."/>
            <person name="Laird G.K."/>
            <person name="Langford C."/>
            <person name="Lawlor S."/>
            <person name="Leongamornlert D.A."/>
            <person name="Leversha M."/>
            <person name="Lloyd C.R."/>
            <person name="Lloyd D.M."/>
            <person name="Loveland J.E."/>
            <person name="Lovell J."/>
            <person name="Martin S."/>
            <person name="Mashreghi-Mohammadi M."/>
            <person name="Maslen G.L."/>
            <person name="Matthews L."/>
            <person name="McCann O.T."/>
            <person name="McLaren S.J."/>
            <person name="McLay K."/>
            <person name="McMurray A."/>
            <person name="Moore M.J.F."/>
            <person name="Mullikin J.C."/>
            <person name="Niblett D."/>
            <person name="Nickerson T."/>
            <person name="Novik K.L."/>
            <person name="Oliver K."/>
            <person name="Overton-Larty E.K."/>
            <person name="Parker A."/>
            <person name="Patel R."/>
            <person name="Pearce A.V."/>
            <person name="Peck A.I."/>
            <person name="Phillimore B.J.C.T."/>
            <person name="Phillips S."/>
            <person name="Plumb R.W."/>
            <person name="Porter K.M."/>
            <person name="Ramsey Y."/>
            <person name="Ranby S.A."/>
            <person name="Rice C.M."/>
            <person name="Ross M.T."/>
            <person name="Searle S.M."/>
            <person name="Sehra H.K."/>
            <person name="Sheridan E."/>
            <person name="Skuce C.D."/>
            <person name="Smith S."/>
            <person name="Smith M."/>
            <person name="Spraggon L."/>
            <person name="Squares S.L."/>
            <person name="Steward C.A."/>
            <person name="Sycamore N."/>
            <person name="Tamlyn-Hall G."/>
            <person name="Tester J."/>
            <person name="Theaker A.J."/>
            <person name="Thomas D.W."/>
            <person name="Thorpe A."/>
            <person name="Tracey A."/>
            <person name="Tromans A."/>
            <person name="Tubby B."/>
            <person name="Wall M."/>
            <person name="Wallis J.M."/>
            <person name="West A.P."/>
            <person name="White S.S."/>
            <person name="Whitehead S.L."/>
            <person name="Whittaker H."/>
            <person name="Wild A."/>
            <person name="Willey D.J."/>
            <person name="Wilmer T.E."/>
            <person name="Wood J.M."/>
            <person name="Wray P.W."/>
            <person name="Wyatt J.C."/>
            <person name="Young L."/>
            <person name="Younger R.M."/>
            <person name="Bentley D.R."/>
            <person name="Coulson A."/>
            <person name="Durbin R.M."/>
            <person name="Hubbard T."/>
            <person name="Sulston J.E."/>
            <person name="Dunham I."/>
            <person name="Rogers J."/>
            <person name="Beck S."/>
        </authorList>
    </citation>
    <scope>NUCLEOTIDE SEQUENCE [LARGE SCALE GENOMIC DNA]</scope>
</reference>
<reference key="3">
    <citation type="submission" date="2005-07" db="EMBL/GenBank/DDBJ databases">
        <authorList>
            <person name="Mural R.J."/>
            <person name="Istrail S."/>
            <person name="Sutton G.G."/>
            <person name="Florea L."/>
            <person name="Halpern A.L."/>
            <person name="Mobarry C.M."/>
            <person name="Lippert R."/>
            <person name="Walenz B."/>
            <person name="Shatkay H."/>
            <person name="Dew I."/>
            <person name="Miller J.R."/>
            <person name="Flanigan M.J."/>
            <person name="Edwards N.J."/>
            <person name="Bolanos R."/>
            <person name="Fasulo D."/>
            <person name="Halldorsson B.V."/>
            <person name="Hannenhalli S."/>
            <person name="Turner R."/>
            <person name="Yooseph S."/>
            <person name="Lu F."/>
            <person name="Nusskern D.R."/>
            <person name="Shue B.C."/>
            <person name="Zheng X.H."/>
            <person name="Zhong F."/>
            <person name="Delcher A.L."/>
            <person name="Huson D.H."/>
            <person name="Kravitz S.A."/>
            <person name="Mouchard L."/>
            <person name="Reinert K."/>
            <person name="Remington K.A."/>
            <person name="Clark A.G."/>
            <person name="Waterman M.S."/>
            <person name="Eichler E.E."/>
            <person name="Adams M.D."/>
            <person name="Hunkapiller M.W."/>
            <person name="Myers E.W."/>
            <person name="Venter J.C."/>
        </authorList>
    </citation>
    <scope>NUCLEOTIDE SEQUENCE [LARGE SCALE GENOMIC DNA]</scope>
</reference>
<reference key="4">
    <citation type="journal article" date="2004" name="Genome Res.">
        <title>The status, quality, and expansion of the NIH full-length cDNA project: the Mammalian Gene Collection (MGC).</title>
        <authorList>
            <consortium name="The MGC Project Team"/>
        </authorList>
    </citation>
    <scope>NUCLEOTIDE SEQUENCE [LARGE SCALE MRNA] (ISOFORMS 1 AND 2)</scope>
    <source>
        <tissue>B-cell</tissue>
        <tissue>PNS</tissue>
    </source>
</reference>
<reference key="5">
    <citation type="journal article" date="1999" name="Genomics">
        <title>Assignment of a new gene (LBH).</title>
        <authorList>
            <person name="Kazmierczak B."/>
            <person name="Borrmann L."/>
            <person name="Bullerdiek J."/>
        </authorList>
    </citation>
    <scope>TISSUE SPECIFICITY</scope>
</reference>
<keyword id="KW-0025">Alternative splicing</keyword>
<keyword id="KW-0325">Glycoprotein</keyword>
<keyword id="KW-0472">Membrane</keyword>
<keyword id="KW-1267">Proteomics identification</keyword>
<keyword id="KW-1185">Reference proteome</keyword>
<keyword id="KW-0812">Transmembrane</keyword>
<keyword id="KW-1133">Transmembrane helix</keyword>
<organism>
    <name type="scientific">Homo sapiens</name>
    <name type="common">Human</name>
    <dbReference type="NCBI Taxonomy" id="9606"/>
    <lineage>
        <taxon>Eukaryota</taxon>
        <taxon>Metazoa</taxon>
        <taxon>Chordata</taxon>
        <taxon>Craniata</taxon>
        <taxon>Vertebrata</taxon>
        <taxon>Euteleostomi</taxon>
        <taxon>Mammalia</taxon>
        <taxon>Eutheria</taxon>
        <taxon>Euarchontoglires</taxon>
        <taxon>Primates</taxon>
        <taxon>Haplorrhini</taxon>
        <taxon>Catarrhini</taxon>
        <taxon>Hominidae</taxon>
        <taxon>Homo</taxon>
    </lineage>
</organism>